<keyword id="KW-0067">ATP-binding</keyword>
<keyword id="KW-0963">Cytoplasm</keyword>
<keyword id="KW-0227">DNA damage</keyword>
<keyword id="KW-0228">DNA excision</keyword>
<keyword id="KW-0234">DNA repair</keyword>
<keyword id="KW-0267">Excision nuclease</keyword>
<keyword id="KW-0347">Helicase</keyword>
<keyword id="KW-0378">Hydrolase</keyword>
<keyword id="KW-0547">Nucleotide-binding</keyword>
<keyword id="KW-0742">SOS response</keyword>
<proteinExistence type="inferred from homology"/>
<comment type="function">
    <text evidence="1">The UvrABC repair system catalyzes the recognition and processing of DNA lesions. A damage recognition complex composed of 2 UvrA and 2 UvrB subunits scans DNA for abnormalities. Upon binding of the UvrA(2)B(2) complex to a putative damaged site, the DNA wraps around one UvrB monomer. DNA wrap is dependent on ATP binding by UvrB and probably causes local melting of the DNA helix, facilitating insertion of UvrB beta-hairpin between the DNA strands. Then UvrB probes one DNA strand for the presence of a lesion. If a lesion is found the UvrA subunits dissociate and the UvrB-DNA preincision complex is formed. This complex is subsequently bound by UvrC and the second UvrB is released. If no lesion is found, the DNA wraps around the other UvrB subunit that will check the other stand for damage.</text>
</comment>
<comment type="subunit">
    <text evidence="1">Forms a heterotetramer with UvrA during the search for lesions. Interacts with UvrC in an incision complex.</text>
</comment>
<comment type="subcellular location">
    <subcellularLocation>
        <location evidence="1">Cytoplasm</location>
    </subcellularLocation>
</comment>
<comment type="domain">
    <text evidence="1">The beta-hairpin motif is involved in DNA binding.</text>
</comment>
<comment type="similarity">
    <text evidence="1">Belongs to the UvrB family.</text>
</comment>
<evidence type="ECO:0000255" key="1">
    <source>
        <dbReference type="HAMAP-Rule" id="MF_00204"/>
    </source>
</evidence>
<name>UVRB_BORBZ</name>
<dbReference type="EMBL" id="CP001205">
    <property type="protein sequence ID" value="ACK75007.1"/>
    <property type="molecule type" value="Genomic_DNA"/>
</dbReference>
<dbReference type="RefSeq" id="WP_012597393.1">
    <property type="nucleotide sequence ID" value="NC_011728.1"/>
</dbReference>
<dbReference type="SMR" id="B7J0S9"/>
<dbReference type="KEGG" id="bbz:BbuZS7_0865"/>
<dbReference type="HOGENOM" id="CLU_009621_2_1_12"/>
<dbReference type="Proteomes" id="UP000006901">
    <property type="component" value="Chromosome"/>
</dbReference>
<dbReference type="GO" id="GO:0005737">
    <property type="term" value="C:cytoplasm"/>
    <property type="evidence" value="ECO:0007669"/>
    <property type="project" value="UniProtKB-SubCell"/>
</dbReference>
<dbReference type="GO" id="GO:0009380">
    <property type="term" value="C:excinuclease repair complex"/>
    <property type="evidence" value="ECO:0007669"/>
    <property type="project" value="InterPro"/>
</dbReference>
<dbReference type="GO" id="GO:0005524">
    <property type="term" value="F:ATP binding"/>
    <property type="evidence" value="ECO:0007669"/>
    <property type="project" value="UniProtKB-UniRule"/>
</dbReference>
<dbReference type="GO" id="GO:0016887">
    <property type="term" value="F:ATP hydrolysis activity"/>
    <property type="evidence" value="ECO:0007669"/>
    <property type="project" value="InterPro"/>
</dbReference>
<dbReference type="GO" id="GO:0003677">
    <property type="term" value="F:DNA binding"/>
    <property type="evidence" value="ECO:0007669"/>
    <property type="project" value="UniProtKB-UniRule"/>
</dbReference>
<dbReference type="GO" id="GO:0009381">
    <property type="term" value="F:excinuclease ABC activity"/>
    <property type="evidence" value="ECO:0007669"/>
    <property type="project" value="UniProtKB-UniRule"/>
</dbReference>
<dbReference type="GO" id="GO:0004386">
    <property type="term" value="F:helicase activity"/>
    <property type="evidence" value="ECO:0007669"/>
    <property type="project" value="UniProtKB-KW"/>
</dbReference>
<dbReference type="GO" id="GO:0006289">
    <property type="term" value="P:nucleotide-excision repair"/>
    <property type="evidence" value="ECO:0007669"/>
    <property type="project" value="UniProtKB-UniRule"/>
</dbReference>
<dbReference type="GO" id="GO:0009432">
    <property type="term" value="P:SOS response"/>
    <property type="evidence" value="ECO:0007669"/>
    <property type="project" value="UniProtKB-UniRule"/>
</dbReference>
<dbReference type="CDD" id="cd17916">
    <property type="entry name" value="DEXHc_UvrB"/>
    <property type="match status" value="1"/>
</dbReference>
<dbReference type="CDD" id="cd18790">
    <property type="entry name" value="SF2_C_UvrB"/>
    <property type="match status" value="1"/>
</dbReference>
<dbReference type="Gene3D" id="3.40.50.300">
    <property type="entry name" value="P-loop containing nucleotide triphosphate hydrolases"/>
    <property type="match status" value="3"/>
</dbReference>
<dbReference type="HAMAP" id="MF_00204">
    <property type="entry name" value="UvrB"/>
    <property type="match status" value="1"/>
</dbReference>
<dbReference type="InterPro" id="IPR006935">
    <property type="entry name" value="Helicase/UvrB_N"/>
</dbReference>
<dbReference type="InterPro" id="IPR014001">
    <property type="entry name" value="Helicase_ATP-bd"/>
</dbReference>
<dbReference type="InterPro" id="IPR001650">
    <property type="entry name" value="Helicase_C-like"/>
</dbReference>
<dbReference type="InterPro" id="IPR027417">
    <property type="entry name" value="P-loop_NTPase"/>
</dbReference>
<dbReference type="InterPro" id="IPR001943">
    <property type="entry name" value="UVR_dom"/>
</dbReference>
<dbReference type="InterPro" id="IPR004807">
    <property type="entry name" value="UvrB"/>
</dbReference>
<dbReference type="InterPro" id="IPR041471">
    <property type="entry name" value="UvrB_inter"/>
</dbReference>
<dbReference type="InterPro" id="IPR024759">
    <property type="entry name" value="UvrB_YAD/RRR_dom"/>
</dbReference>
<dbReference type="NCBIfam" id="NF003673">
    <property type="entry name" value="PRK05298.1"/>
    <property type="match status" value="1"/>
</dbReference>
<dbReference type="NCBIfam" id="TIGR00631">
    <property type="entry name" value="uvrb"/>
    <property type="match status" value="1"/>
</dbReference>
<dbReference type="PANTHER" id="PTHR24029">
    <property type="entry name" value="UVRABC SYSTEM PROTEIN B"/>
    <property type="match status" value="1"/>
</dbReference>
<dbReference type="PANTHER" id="PTHR24029:SF0">
    <property type="entry name" value="UVRABC SYSTEM PROTEIN B"/>
    <property type="match status" value="1"/>
</dbReference>
<dbReference type="Pfam" id="PF00271">
    <property type="entry name" value="Helicase_C"/>
    <property type="match status" value="1"/>
</dbReference>
<dbReference type="Pfam" id="PF04851">
    <property type="entry name" value="ResIII"/>
    <property type="match status" value="1"/>
</dbReference>
<dbReference type="Pfam" id="PF02151">
    <property type="entry name" value="UVR"/>
    <property type="match status" value="1"/>
</dbReference>
<dbReference type="Pfam" id="PF12344">
    <property type="entry name" value="UvrB"/>
    <property type="match status" value="1"/>
</dbReference>
<dbReference type="Pfam" id="PF17757">
    <property type="entry name" value="UvrB_inter"/>
    <property type="match status" value="1"/>
</dbReference>
<dbReference type="SMART" id="SM00487">
    <property type="entry name" value="DEXDc"/>
    <property type="match status" value="1"/>
</dbReference>
<dbReference type="SMART" id="SM00490">
    <property type="entry name" value="HELICc"/>
    <property type="match status" value="1"/>
</dbReference>
<dbReference type="SUPFAM" id="SSF52540">
    <property type="entry name" value="P-loop containing nucleoside triphosphate hydrolases"/>
    <property type="match status" value="2"/>
</dbReference>
<dbReference type="PROSITE" id="PS51192">
    <property type="entry name" value="HELICASE_ATP_BIND_1"/>
    <property type="match status" value="1"/>
</dbReference>
<dbReference type="PROSITE" id="PS51194">
    <property type="entry name" value="HELICASE_CTER"/>
    <property type="match status" value="1"/>
</dbReference>
<dbReference type="PROSITE" id="PS50151">
    <property type="entry name" value="UVR"/>
    <property type="match status" value="1"/>
</dbReference>
<accession>B7J0S9</accession>
<gene>
    <name evidence="1" type="primary">uvrB</name>
    <name type="ordered locus">BbuZS7_0865</name>
</gene>
<organism>
    <name type="scientific">Borreliella burgdorferi (strain ZS7)</name>
    <name type="common">Borrelia burgdorferi</name>
    <dbReference type="NCBI Taxonomy" id="445985"/>
    <lineage>
        <taxon>Bacteria</taxon>
        <taxon>Pseudomonadati</taxon>
        <taxon>Spirochaetota</taxon>
        <taxon>Spirochaetia</taxon>
        <taxon>Spirochaetales</taxon>
        <taxon>Borreliaceae</taxon>
        <taxon>Borreliella</taxon>
    </lineage>
</organism>
<reference key="1">
    <citation type="journal article" date="2011" name="J. Bacteriol.">
        <title>Whole-genome sequences of thirteen isolates of Borrelia burgdorferi.</title>
        <authorList>
            <person name="Schutzer S.E."/>
            <person name="Fraser-Liggett C.M."/>
            <person name="Casjens S.R."/>
            <person name="Qiu W.G."/>
            <person name="Dunn J.J."/>
            <person name="Mongodin E.F."/>
            <person name="Luft B.J."/>
        </authorList>
    </citation>
    <scope>NUCLEOTIDE SEQUENCE [LARGE SCALE GENOMIC DNA]</scope>
    <source>
        <strain>ZS7</strain>
    </source>
</reference>
<feature type="chain" id="PRO_1000200533" description="UvrABC system protein B">
    <location>
        <begin position="1"/>
        <end position="668"/>
    </location>
</feature>
<feature type="domain" description="Helicase ATP-binding" evidence="1">
    <location>
        <begin position="25"/>
        <end position="170"/>
    </location>
</feature>
<feature type="domain" description="Helicase C-terminal" evidence="1">
    <location>
        <begin position="429"/>
        <end position="595"/>
    </location>
</feature>
<feature type="domain" description="UVR" evidence="1">
    <location>
        <begin position="622"/>
        <end position="657"/>
    </location>
</feature>
<feature type="short sequence motif" description="Beta-hairpin">
    <location>
        <begin position="91"/>
        <end position="114"/>
    </location>
</feature>
<feature type="binding site" evidence="1">
    <location>
        <begin position="38"/>
        <end position="45"/>
    </location>
    <ligand>
        <name>ATP</name>
        <dbReference type="ChEBI" id="CHEBI:30616"/>
    </ligand>
</feature>
<protein>
    <recommendedName>
        <fullName evidence="1">UvrABC system protein B</fullName>
        <shortName evidence="1">Protein UvrB</shortName>
    </recommendedName>
    <alternativeName>
        <fullName evidence="1">Excinuclease ABC subunit B</fullName>
    </alternativeName>
</protein>
<sequence length="668" mass="77167">MIDFFLKSEYLPAGDQPKAIKEIENSILLGNKYQTLKGVTGSGKTFTIANIIKDLNRPALVVSHNKTLAAQLYREFKDFFPNNAVEYFVSYYDYYQPESYVPSKDLFIEKEATINTEIEIKRIRTVTSLAKRRDVIVVATVSSIYALGSPDFFKKSAREFFVGQKISIKEISDIFVELYYERTLMNLERDKFSIKGDIVEIWPSSEHGEFAYRICLDFDEIVEIYRVSSFSKKKLGATNSFTLFAKSYFVIPYENVLEAIPKISHDLSLQCQYFKDNGRLVEAERLKQRVEYDLEMLRETGFCSGIENYSKYLSGSTMERPYCLFDFFPKDYLLFVDESHVTLPQFRGMYNGDHSRKLNLVNFGFRLPAALENRPLKYDEFEALINQVVFVSATPGVEENEKSSVVVDQIIRPTGLVDPEIITRRSDGQMEDLYSEIQKRVALKERVLITTLTKKMSEDLTEYLVNLGVRAKYLHSELDTLERVEVISLLRKSEIDVIVGINLLREGLDIPEVSLVAILDADKVGFLRSTTSLIQTIGRAARNSNGLVIMYYDKISLAMREAIEETNRRRQIQIDYNEKNNITPKTIVKKIQNILEKELNNKNKNVGYDFEKIISDERLSKKKLIDKLKFDLEEAVNDERFEDAIVLRDKIKELSSKISIARNKKREV</sequence>